<evidence type="ECO:0000255" key="1">
    <source>
        <dbReference type="HAMAP-Rule" id="MF_04024"/>
    </source>
</evidence>
<evidence type="ECO:0000256" key="2">
    <source>
        <dbReference type="SAM" id="MobiDB-lite"/>
    </source>
</evidence>
<evidence type="ECO:0000269" key="3">
    <source>
    </source>
</evidence>
<evidence type="ECO:0000269" key="4">
    <source>
    </source>
</evidence>
<evidence type="ECO:0000269" key="5">
    <source>
    </source>
</evidence>
<evidence type="ECO:0000269" key="6">
    <source>
    </source>
</evidence>
<evidence type="ECO:0000269" key="7">
    <source>
    </source>
</evidence>
<evidence type="ECO:0000269" key="8">
    <source>
    </source>
</evidence>
<evidence type="ECO:0000269" key="9">
    <source>
    </source>
</evidence>
<proteinExistence type="evidence at protein level"/>
<reference key="1">
    <citation type="journal article" date="1984" name="Nature">
        <title>DNA sequence and expression of the B95-8 Epstein-Barr virus genome.</title>
        <authorList>
            <person name="Baer R."/>
            <person name="Bankier A.T."/>
            <person name="Biggin M.D."/>
            <person name="Deininger P.L."/>
            <person name="Farrell P.J."/>
            <person name="Gibson T.J."/>
            <person name="Hatfull G."/>
            <person name="Hudson G.S."/>
            <person name="Satchwell S.C."/>
            <person name="Seguin C."/>
            <person name="Tuffnell P.S."/>
            <person name="Barrell B.G."/>
        </authorList>
    </citation>
    <scope>NUCLEOTIDE SEQUENCE [LARGE SCALE GENOMIC DNA]</scope>
</reference>
<reference key="2">
    <citation type="journal article" date="1985" name="Virology">
        <title>The BamHI F region of the B95-8 Epstein-Barr virus genome.</title>
        <authorList>
            <person name="Hudson G.S."/>
            <person name="Gibson T.J."/>
            <person name="Barrell B.G."/>
        </authorList>
    </citation>
    <scope>NUCLEOTIDE SEQUENCE [GENOMIC DNA]</scope>
</reference>
<reference key="3">
    <citation type="journal article" date="2003" name="Virology">
        <title>Updated Epstein-Barr virus (EBV) DNA sequence and analysis of a promoter for the BART (CST, BARF0) RNAs of EBV.</title>
        <authorList>
            <person name="de Jesus O."/>
            <person name="Smith P.R."/>
            <person name="Spender L.C."/>
            <person name="Elgueta Karstegl C."/>
            <person name="Niller H.H."/>
            <person name="Huang D."/>
            <person name="Farrell P.J."/>
        </authorList>
    </citation>
    <scope>GENOME REANNOTATION</scope>
</reference>
<reference key="4">
    <citation type="journal article" date="2000" name="J. Virol.">
        <title>The BFRF1 gene of Epstein-Barr virus encodes a novel protein.</title>
        <authorList>
            <person name="Farina A."/>
            <person name="Santarelli R."/>
            <person name="Gonnella R."/>
            <person name="Bei R."/>
            <person name="Muraro R."/>
            <person name="Cardinali G."/>
            <person name="Uccini S."/>
            <person name="Ragona G."/>
            <person name="Frati L."/>
            <person name="Faggioni A."/>
            <person name="Angeloni A."/>
        </authorList>
    </citation>
    <scope>IDENTIFICATION</scope>
    <scope>SUBCELLULAR LOCATION</scope>
</reference>
<reference key="5">
    <citation type="journal article" date="2005" name="J. Virol.">
        <title>BFRF1 of Epstein-Barr virus is essential for efficient primary viral envelopment and egress.</title>
        <authorList>
            <person name="Farina A."/>
            <person name="Feederle R."/>
            <person name="Raffa S."/>
            <person name="Gonnella R."/>
            <person name="Santarelli R."/>
            <person name="Frati L."/>
            <person name="Angeloni A."/>
            <person name="Torrisi M.R."/>
            <person name="Faggioni A."/>
            <person name="Delecluse H.J."/>
        </authorList>
    </citation>
    <scope>FUNCTION</scope>
</reference>
<reference key="6">
    <citation type="journal article" date="2005" name="J. Virol.">
        <title>Characterization and intracellular localization of the Epstein-Barr virus protein BFLF2: interactions with BFRF1 and with the nuclear lamina.</title>
        <authorList>
            <person name="Gonnella R."/>
            <person name="Farina A."/>
            <person name="Santarelli R."/>
            <person name="Raffa S."/>
            <person name="Feederle R."/>
            <person name="Bei R."/>
            <person name="Granato M."/>
            <person name="Modesti A."/>
            <person name="Frati L."/>
            <person name="Delecluse H.J."/>
            <person name="Torrisi M.R."/>
            <person name="Angeloni A."/>
            <person name="Faggioni A."/>
        </authorList>
    </citation>
    <scope>INTERACTION WITH BFLF2</scope>
    <scope>SUBCELLULAR LOCATION</scope>
</reference>
<reference key="7">
    <citation type="journal article" date="2006" name="J. Virol.">
        <title>Common and specific properties of herpesvirus UL34/UL31 protein family members revealed by protein complementation assay.</title>
        <authorList>
            <person name="Schnee M."/>
            <person name="Ruzsics Z."/>
            <person name="Bubeck A."/>
            <person name="Koszinowski U.H."/>
        </authorList>
    </citation>
    <scope>INTERACTION WITH BFLF2</scope>
</reference>
<reference key="8">
    <citation type="journal article" date="2006" name="Virology">
        <title>Regulation of the expression of the Epstein-Barr virus early gene BFRF1.</title>
        <authorList>
            <person name="Granato M."/>
            <person name="Farina A."/>
            <person name="Gonnella R."/>
            <person name="Santarelli R."/>
            <person name="Frati L."/>
            <person name="Faggioni A."/>
            <person name="Angeloni A."/>
        </authorList>
    </citation>
    <scope>FUNCTION</scope>
</reference>
<reference key="9">
    <citation type="journal article" date="2020" name="Front. Immunol.">
        <title>Epstein-Barr Virus Early Protein BFRF1 Suppresses IFN-beta Activity by Inhibiting the Activation of IRF3.</title>
        <authorList>
            <person name="Wang P."/>
            <person name="Deng Y."/>
            <person name="Guo Y."/>
            <person name="Xu Z."/>
            <person name="Li Y."/>
            <person name="Ou X."/>
            <person name="Xie L."/>
            <person name="Lu M."/>
            <person name="Zhong J."/>
            <person name="Li B."/>
            <person name="Hu L."/>
            <person name="Deng S."/>
            <person name="Peng T."/>
            <person name="Cai M."/>
            <person name="Li M."/>
        </authorList>
    </citation>
    <scope>INTERACTION WITH HOST IKBKE</scope>
    <scope>SUBCELLULAR LOCATION</scope>
    <scope>FUNCTION</scope>
</reference>
<reference key="10">
    <citation type="journal article" date="2022" name="PLoS Pathog.">
        <title>The nuclear egress complex of Epstein-Barr virus buds membranes through an oligomerization-driven mechanism.</title>
        <authorList>
            <person name="Thorsen M.K."/>
            <person name="Draganova E.B."/>
            <person name="Heldwein E.E."/>
        </authorList>
    </citation>
    <scope>X-RAY CRYSTALLOGRAPHY (3.97 ANGSTROMS) OF 1-195</scope>
    <scope>IN COMPLEX WITH NEC2</scope>
    <scope>SUBUNIT</scope>
    <scope>MUTAGENESIS OF GLN-43; LEU-87 AND ASN-121</scope>
</reference>
<feature type="chain" id="PRO_0000116033" description="Nuclear egress protein 2">
    <location>
        <begin position="1"/>
        <end position="336"/>
    </location>
</feature>
<feature type="topological domain" description="Perinuclear space" evidence="1">
    <location>
        <begin position="1"/>
        <end position="315"/>
    </location>
</feature>
<feature type="transmembrane region" description="Helical" evidence="1">
    <location>
        <begin position="316"/>
        <end position="333"/>
    </location>
</feature>
<feature type="topological domain" description="Nuclear" evidence="1">
    <location>
        <begin position="334"/>
        <end position="336"/>
    </location>
</feature>
<feature type="region of interest" description="Disordered" evidence="2">
    <location>
        <begin position="193"/>
        <end position="221"/>
    </location>
</feature>
<feature type="region of interest" description="Disordered" evidence="2">
    <location>
        <begin position="277"/>
        <end position="297"/>
    </location>
</feature>
<feature type="compositionally biased region" description="Basic residues" evidence="2">
    <location>
        <begin position="277"/>
        <end position="288"/>
    </location>
</feature>
<feature type="mutagenesis site" description="88% loss of budding ability." evidence="9">
    <original>Q</original>
    <variation>A</variation>
    <location>
        <position position="43"/>
    </location>
</feature>
<feature type="mutagenesis site" description="No effect on budding ability.">
    <original>L</original>
    <variation>W</variation>
    <location>
        <position position="87"/>
    </location>
</feature>
<feature type="mutagenesis site" description="45% loss of budding ability.">
    <original>N</original>
    <variation>Q</variation>
    <location>
        <position position="121"/>
    </location>
</feature>
<dbReference type="EMBL" id="V01555">
    <property type="protein sequence ID" value="CAA24879.1"/>
    <property type="molecule type" value="Genomic_DNA"/>
</dbReference>
<dbReference type="EMBL" id="M11923">
    <property type="protein sequence ID" value="AAA45869.1"/>
    <property type="molecule type" value="Genomic_DNA"/>
</dbReference>
<dbReference type="EMBL" id="AJ507799">
    <property type="protein sequence ID" value="CAD53399.1"/>
    <property type="molecule type" value="Genomic_DNA"/>
</dbReference>
<dbReference type="PIR" id="F93065">
    <property type="entry name" value="QQBE7"/>
</dbReference>
<dbReference type="RefSeq" id="YP_401649.1">
    <property type="nucleotide sequence ID" value="NC_007605.1"/>
</dbReference>
<dbReference type="PDB" id="7T7I">
    <property type="method" value="X-ray"/>
    <property type="resolution" value="3.97 A"/>
    <property type="chains" value="A/C/E/G/I=1-195"/>
</dbReference>
<dbReference type="PDBsum" id="7T7I"/>
<dbReference type="SMR" id="P03185"/>
<dbReference type="BioGRID" id="971741">
    <property type="interactions" value="4"/>
</dbReference>
<dbReference type="IntAct" id="P03185">
    <property type="interactions" value="17"/>
</dbReference>
<dbReference type="MINT" id="P03185"/>
<dbReference type="DNASU" id="3783699"/>
<dbReference type="GeneID" id="3783699"/>
<dbReference type="KEGG" id="vg:3783699"/>
<dbReference type="Proteomes" id="UP000153037">
    <property type="component" value="Segment"/>
</dbReference>
<dbReference type="GO" id="GO:0044201">
    <property type="term" value="C:host cell nuclear inner membrane"/>
    <property type="evidence" value="ECO:0007669"/>
    <property type="project" value="UniProtKB-SubCell"/>
</dbReference>
<dbReference type="GO" id="GO:0044220">
    <property type="term" value="C:host cell perinuclear region of cytoplasm"/>
    <property type="evidence" value="ECO:0007669"/>
    <property type="project" value="UniProtKB-SubCell"/>
</dbReference>
<dbReference type="GO" id="GO:0016020">
    <property type="term" value="C:membrane"/>
    <property type="evidence" value="ECO:0007669"/>
    <property type="project" value="UniProtKB-KW"/>
</dbReference>
<dbReference type="GO" id="GO:0046765">
    <property type="term" value="P:viral budding from nuclear membrane"/>
    <property type="evidence" value="ECO:0000314"/>
    <property type="project" value="UniProtKB"/>
</dbReference>
<dbReference type="HAMAP" id="MF_04024">
    <property type="entry name" value="HSV_NEC2"/>
    <property type="match status" value="1"/>
</dbReference>
<dbReference type="InterPro" id="IPR007626">
    <property type="entry name" value="Herpesvirus_viron_egress-type"/>
</dbReference>
<dbReference type="Pfam" id="PF04541">
    <property type="entry name" value="Herpes_U34"/>
    <property type="match status" value="1"/>
</dbReference>
<organismHost>
    <name type="scientific">Homo sapiens</name>
    <name type="common">Human</name>
    <dbReference type="NCBI Taxonomy" id="9606"/>
</organismHost>
<organism>
    <name type="scientific">Epstein-Barr virus (strain B95-8)</name>
    <name type="common">HHV-4</name>
    <name type="synonym">Human herpesvirus 4</name>
    <dbReference type="NCBI Taxonomy" id="10377"/>
    <lineage>
        <taxon>Viruses</taxon>
        <taxon>Duplodnaviria</taxon>
        <taxon>Heunggongvirae</taxon>
        <taxon>Peploviricota</taxon>
        <taxon>Herviviricetes</taxon>
        <taxon>Herpesvirales</taxon>
        <taxon>Orthoherpesviridae</taxon>
        <taxon>Gammaherpesvirinae</taxon>
        <taxon>Lymphocryptovirus</taxon>
        <taxon>Lymphocryptovirus humangamma4</taxon>
        <taxon>Epstein-Barr virus (strain GD1)</taxon>
    </lineage>
</organism>
<name>NEC2_EBVB9</name>
<protein>
    <recommendedName>
        <fullName evidence="1">Nuclear egress protein 2</fullName>
    </recommendedName>
</protein>
<gene>
    <name evidence="1" type="primary">NEC2</name>
    <name type="ORF">BFRF1</name>
</gene>
<sequence>MASPEERLLDELNNVIVSFLCDSGSLEVERCSGAHVFSRGSSQPLCTVKLRHGQIYHLEFVYKFLAFKLKNCNYPSSPVFVISNNGLATTLRCFLHEPSGLRSGQSGPCLGLSTDVDLPKNSIIMLGQDDFIKFKSPLVFPAELDLLKSMVVCRAYITEHRTTMQFLVFQAANAQKASRVMDMISDMSQQLSRSGQVEDTGARVTGGGGPRPGVTHSGCLGDSHVRGRGGWDLDNFSEAETEDEASYAPWRDKDSWSESEAAPWKKELVRHPIRRHRTRETRRMRGSHSRVEHVPPETRETVVGGAWRYSWRATPYLARVLAVTAVALLLMFLRWT</sequence>
<comment type="function">
    <text evidence="1 4 6 8">Plays an essential role in virion nuclear egress, the first step of virion release from infected cell. Within the host nucleus, NEC1 interacts with the newly formed capsid through the vertexes and directs it to the inner nuclear membrane by associating with NEC2. Induces the budding of the capsid at the inner nuclear membrane as well as its envelopment into the perinuclear space. There, the NEC1/NEC2 complex promotes the fusion of the enveloped capsid with the outer nuclear membrane and the subsequent release of the viral capsid into the cytoplasm where it will reach the secondary budding sites in the host Golgi or trans-Golgi network (By similarity). Inhibits host IKBKE and IRF3, thereby impairing type I IFN signaling (PubMed:33391252).</text>
</comment>
<comment type="subunit">
    <text evidence="1 5 7 8 9">Forms a heterodimeric viral nuclear egress complex (NEC) with NEC1 (PubMed:35802751). Interacts with host IKBKE; this interaction inhibits host IKBKE kinase activity and IRF3 nuclear translocation (PubMed:33391252).</text>
</comment>
<comment type="interaction">
    <interactant intactId="EBI-2620196">
        <id>P03185</id>
    </interactant>
    <interactant intactId="EBI-2620189">
        <id>P0CK47</id>
        <label>NEC1</label>
    </interactant>
    <organismsDiffer>false</organismsDiffer>
    <experiments>3</experiments>
</comment>
<comment type="subcellular location">
    <subcellularLocation>
        <location evidence="1 3 5">Host nucleus inner membrane</location>
        <topology evidence="1 3 5">Single-pass membrane protein</topology>
    </subcellularLocation>
    <subcellularLocation>
        <location evidence="8">Host cytoplasm</location>
        <location evidence="8">Host perinuclear region</location>
    </subcellularLocation>
    <text evidence="1">Also localizes at the transient membrane of perinuclear virions.</text>
</comment>
<comment type="PTM">
    <text evidence="1">Phosphorylated.</text>
</comment>
<comment type="similarity">
    <text evidence="1">Belongs to the herpesviridae NEC2 protein family.</text>
</comment>
<keyword id="KW-0002">3D-structure</keyword>
<keyword id="KW-1035">Host cytoplasm</keyword>
<keyword id="KW-1043">Host membrane</keyword>
<keyword id="KW-1048">Host nucleus</keyword>
<keyword id="KW-0426">Late protein</keyword>
<keyword id="KW-0472">Membrane</keyword>
<keyword id="KW-0597">Phosphoprotein</keyword>
<keyword id="KW-1185">Reference proteome</keyword>
<keyword id="KW-0812">Transmembrane</keyword>
<keyword id="KW-1133">Transmembrane helix</keyword>
<accession>P03185</accession>
<accession>Q777G7</accession>